<comment type="function">
    <text evidence="1">ATP-dependent specificity component of the Clp protease. It directs the protease to specific substrates. Can perform chaperone functions in the absence of ClpP.</text>
</comment>
<comment type="subunit">
    <text evidence="1">Component of the ClpX-ClpP complex. Forms a hexameric ring that, in the presence of ATP, binds to fourteen ClpP subunits assembled into a disk-like structure with a central cavity, resembling the structure of eukaryotic proteasomes.</text>
</comment>
<comment type="similarity">
    <text evidence="1">Belongs to the ClpX chaperone family.</text>
</comment>
<evidence type="ECO:0000255" key="1">
    <source>
        <dbReference type="HAMAP-Rule" id="MF_00175"/>
    </source>
</evidence>
<evidence type="ECO:0000255" key="2">
    <source>
        <dbReference type="PROSITE-ProRule" id="PRU01250"/>
    </source>
</evidence>
<keyword id="KW-0067">ATP-binding</keyword>
<keyword id="KW-0143">Chaperone</keyword>
<keyword id="KW-0479">Metal-binding</keyword>
<keyword id="KW-0547">Nucleotide-binding</keyword>
<keyword id="KW-0862">Zinc</keyword>
<organism>
    <name type="scientific">Enterobacter sp. (strain 638)</name>
    <dbReference type="NCBI Taxonomy" id="399742"/>
    <lineage>
        <taxon>Bacteria</taxon>
        <taxon>Pseudomonadati</taxon>
        <taxon>Pseudomonadota</taxon>
        <taxon>Gammaproteobacteria</taxon>
        <taxon>Enterobacterales</taxon>
        <taxon>Enterobacteriaceae</taxon>
        <taxon>Enterobacter</taxon>
    </lineage>
</organism>
<gene>
    <name evidence="1" type="primary">clpX</name>
    <name type="ordered locus">Ent638_0905</name>
</gene>
<accession>A4W7A9</accession>
<protein>
    <recommendedName>
        <fullName evidence="1">ATP-dependent Clp protease ATP-binding subunit ClpX</fullName>
    </recommendedName>
</protein>
<proteinExistence type="inferred from homology"/>
<feature type="chain" id="PRO_1000058339" description="ATP-dependent Clp protease ATP-binding subunit ClpX">
    <location>
        <begin position="1"/>
        <end position="424"/>
    </location>
</feature>
<feature type="domain" description="ClpX-type ZB" evidence="2">
    <location>
        <begin position="2"/>
        <end position="56"/>
    </location>
</feature>
<feature type="binding site" evidence="2">
    <location>
        <position position="15"/>
    </location>
    <ligand>
        <name>Zn(2+)</name>
        <dbReference type="ChEBI" id="CHEBI:29105"/>
    </ligand>
</feature>
<feature type="binding site" evidence="2">
    <location>
        <position position="18"/>
    </location>
    <ligand>
        <name>Zn(2+)</name>
        <dbReference type="ChEBI" id="CHEBI:29105"/>
    </ligand>
</feature>
<feature type="binding site" evidence="2">
    <location>
        <position position="37"/>
    </location>
    <ligand>
        <name>Zn(2+)</name>
        <dbReference type="ChEBI" id="CHEBI:29105"/>
    </ligand>
</feature>
<feature type="binding site" evidence="2">
    <location>
        <position position="40"/>
    </location>
    <ligand>
        <name>Zn(2+)</name>
        <dbReference type="ChEBI" id="CHEBI:29105"/>
    </ligand>
</feature>
<feature type="binding site" evidence="1">
    <location>
        <begin position="120"/>
        <end position="127"/>
    </location>
    <ligand>
        <name>ATP</name>
        <dbReference type="ChEBI" id="CHEBI:30616"/>
    </ligand>
</feature>
<dbReference type="EMBL" id="CP000653">
    <property type="protein sequence ID" value="ABP59589.1"/>
    <property type="molecule type" value="Genomic_DNA"/>
</dbReference>
<dbReference type="RefSeq" id="WP_012016310.1">
    <property type="nucleotide sequence ID" value="NC_009436.1"/>
</dbReference>
<dbReference type="BMRB" id="A4W7A9"/>
<dbReference type="SMR" id="A4W7A9"/>
<dbReference type="STRING" id="399742.Ent638_0905"/>
<dbReference type="KEGG" id="ent:Ent638_0905"/>
<dbReference type="eggNOG" id="COG1219">
    <property type="taxonomic scope" value="Bacteria"/>
</dbReference>
<dbReference type="HOGENOM" id="CLU_014218_8_2_6"/>
<dbReference type="OrthoDB" id="9804062at2"/>
<dbReference type="Proteomes" id="UP000000230">
    <property type="component" value="Chromosome"/>
</dbReference>
<dbReference type="GO" id="GO:0009376">
    <property type="term" value="C:HslUV protease complex"/>
    <property type="evidence" value="ECO:0007669"/>
    <property type="project" value="TreeGrafter"/>
</dbReference>
<dbReference type="GO" id="GO:0005524">
    <property type="term" value="F:ATP binding"/>
    <property type="evidence" value="ECO:0007669"/>
    <property type="project" value="UniProtKB-UniRule"/>
</dbReference>
<dbReference type="GO" id="GO:0016887">
    <property type="term" value="F:ATP hydrolysis activity"/>
    <property type="evidence" value="ECO:0007669"/>
    <property type="project" value="InterPro"/>
</dbReference>
<dbReference type="GO" id="GO:0140662">
    <property type="term" value="F:ATP-dependent protein folding chaperone"/>
    <property type="evidence" value="ECO:0007669"/>
    <property type="project" value="InterPro"/>
</dbReference>
<dbReference type="GO" id="GO:0046983">
    <property type="term" value="F:protein dimerization activity"/>
    <property type="evidence" value="ECO:0007669"/>
    <property type="project" value="InterPro"/>
</dbReference>
<dbReference type="GO" id="GO:0051082">
    <property type="term" value="F:unfolded protein binding"/>
    <property type="evidence" value="ECO:0007669"/>
    <property type="project" value="UniProtKB-UniRule"/>
</dbReference>
<dbReference type="GO" id="GO:0008270">
    <property type="term" value="F:zinc ion binding"/>
    <property type="evidence" value="ECO:0007669"/>
    <property type="project" value="InterPro"/>
</dbReference>
<dbReference type="GO" id="GO:0051301">
    <property type="term" value="P:cell division"/>
    <property type="evidence" value="ECO:0007669"/>
    <property type="project" value="TreeGrafter"/>
</dbReference>
<dbReference type="GO" id="GO:0051603">
    <property type="term" value="P:proteolysis involved in protein catabolic process"/>
    <property type="evidence" value="ECO:0007669"/>
    <property type="project" value="TreeGrafter"/>
</dbReference>
<dbReference type="CDD" id="cd19497">
    <property type="entry name" value="RecA-like_ClpX"/>
    <property type="match status" value="1"/>
</dbReference>
<dbReference type="FunFam" id="1.10.8.60:FF:000002">
    <property type="entry name" value="ATP-dependent Clp protease ATP-binding subunit ClpX"/>
    <property type="match status" value="1"/>
</dbReference>
<dbReference type="FunFam" id="3.40.50.300:FF:000005">
    <property type="entry name" value="ATP-dependent Clp protease ATP-binding subunit ClpX"/>
    <property type="match status" value="1"/>
</dbReference>
<dbReference type="Gene3D" id="1.10.8.60">
    <property type="match status" value="1"/>
</dbReference>
<dbReference type="Gene3D" id="6.20.220.10">
    <property type="entry name" value="ClpX chaperone, C4-type zinc finger domain"/>
    <property type="match status" value="1"/>
</dbReference>
<dbReference type="Gene3D" id="3.40.50.300">
    <property type="entry name" value="P-loop containing nucleotide triphosphate hydrolases"/>
    <property type="match status" value="1"/>
</dbReference>
<dbReference type="HAMAP" id="MF_00175">
    <property type="entry name" value="ClpX"/>
    <property type="match status" value="1"/>
</dbReference>
<dbReference type="InterPro" id="IPR003593">
    <property type="entry name" value="AAA+_ATPase"/>
</dbReference>
<dbReference type="InterPro" id="IPR050052">
    <property type="entry name" value="ATP-dep_Clp_protease_ClpX"/>
</dbReference>
<dbReference type="InterPro" id="IPR003959">
    <property type="entry name" value="ATPase_AAA_core"/>
</dbReference>
<dbReference type="InterPro" id="IPR019489">
    <property type="entry name" value="Clp_ATPase_C"/>
</dbReference>
<dbReference type="InterPro" id="IPR004487">
    <property type="entry name" value="Clp_protease_ATP-bd_su_ClpX"/>
</dbReference>
<dbReference type="InterPro" id="IPR046425">
    <property type="entry name" value="ClpX_bact"/>
</dbReference>
<dbReference type="InterPro" id="IPR027417">
    <property type="entry name" value="P-loop_NTPase"/>
</dbReference>
<dbReference type="InterPro" id="IPR010603">
    <property type="entry name" value="Znf_CppX_C4"/>
</dbReference>
<dbReference type="InterPro" id="IPR038366">
    <property type="entry name" value="Znf_CppX_C4_sf"/>
</dbReference>
<dbReference type="NCBIfam" id="TIGR00382">
    <property type="entry name" value="clpX"/>
    <property type="match status" value="1"/>
</dbReference>
<dbReference type="NCBIfam" id="NF003745">
    <property type="entry name" value="PRK05342.1"/>
    <property type="match status" value="1"/>
</dbReference>
<dbReference type="PANTHER" id="PTHR48102:SF7">
    <property type="entry name" value="ATP-DEPENDENT CLP PROTEASE ATP-BINDING SUBUNIT CLPX-LIKE, MITOCHONDRIAL"/>
    <property type="match status" value="1"/>
</dbReference>
<dbReference type="PANTHER" id="PTHR48102">
    <property type="entry name" value="ATP-DEPENDENT CLP PROTEASE ATP-BINDING SUBUNIT CLPX-LIKE, MITOCHONDRIAL-RELATED"/>
    <property type="match status" value="1"/>
</dbReference>
<dbReference type="Pfam" id="PF07724">
    <property type="entry name" value="AAA_2"/>
    <property type="match status" value="1"/>
</dbReference>
<dbReference type="Pfam" id="PF10431">
    <property type="entry name" value="ClpB_D2-small"/>
    <property type="match status" value="1"/>
</dbReference>
<dbReference type="Pfam" id="PF06689">
    <property type="entry name" value="zf-C4_ClpX"/>
    <property type="match status" value="1"/>
</dbReference>
<dbReference type="SMART" id="SM00382">
    <property type="entry name" value="AAA"/>
    <property type="match status" value="1"/>
</dbReference>
<dbReference type="SMART" id="SM01086">
    <property type="entry name" value="ClpB_D2-small"/>
    <property type="match status" value="1"/>
</dbReference>
<dbReference type="SMART" id="SM00994">
    <property type="entry name" value="zf-C4_ClpX"/>
    <property type="match status" value="1"/>
</dbReference>
<dbReference type="SUPFAM" id="SSF57716">
    <property type="entry name" value="Glucocorticoid receptor-like (DNA-binding domain)"/>
    <property type="match status" value="1"/>
</dbReference>
<dbReference type="SUPFAM" id="SSF52540">
    <property type="entry name" value="P-loop containing nucleoside triphosphate hydrolases"/>
    <property type="match status" value="1"/>
</dbReference>
<dbReference type="PROSITE" id="PS51902">
    <property type="entry name" value="CLPX_ZB"/>
    <property type="match status" value="1"/>
</dbReference>
<sequence length="424" mass="46401">MTDKRKDGSGKLLYCSFCGKSQHEVRKLIAGPSVYICDECVDLCNDIIREEIKEVAPHRERSALPTPHEIRHHLDDYVIGQEPAKKVLAVAVYNHYKRLRNGDTSNGVELGKSNILLIGPTGSGKTLLAETLARLLDVPFTMADATTLTEAGYVGEDVENIIQKLLQKCDYDVQKAQRGIVYIDEIDKISRKSDNPSITRDVSGEGVQQALLKLIEGTVAAVPPQGGRKHPQQEFLQVDTSKILFICGGAFAGLDKVISHRVETGSGIGFGATVKAKSEKANEGELLSQVEPEDLIKFGLIPEFIGRLPVVATLNELSEDALIQILKEPKNALTKQYQALFNLEGVDLEFRDEALIAIAKKAMIRKTGARGLRSIVEAALLDTMYDLPSMEDVEKVVIDEAVISGQTKPLLIYGKPEAQQASGE</sequence>
<reference key="1">
    <citation type="journal article" date="2010" name="PLoS Genet.">
        <title>Genome sequence of the plant growth promoting endophytic bacterium Enterobacter sp. 638.</title>
        <authorList>
            <person name="Taghavi S."/>
            <person name="van der Lelie D."/>
            <person name="Hoffman A."/>
            <person name="Zhang Y.B."/>
            <person name="Walla M.D."/>
            <person name="Vangronsveld J."/>
            <person name="Newman L."/>
            <person name="Monchy S."/>
        </authorList>
    </citation>
    <scope>NUCLEOTIDE SEQUENCE [LARGE SCALE GENOMIC DNA]</scope>
    <source>
        <strain>638</strain>
    </source>
</reference>
<name>CLPX_ENT38</name>